<name>FADI_ALIF1</name>
<comment type="function">
    <text evidence="1">Catalyzes the final step of fatty acid oxidation in which acetyl-CoA is released and the CoA ester of a fatty acid two carbons shorter is formed.</text>
</comment>
<comment type="catalytic activity">
    <reaction evidence="1">
        <text>an acyl-CoA + acetyl-CoA = a 3-oxoacyl-CoA + CoA</text>
        <dbReference type="Rhea" id="RHEA:21564"/>
        <dbReference type="ChEBI" id="CHEBI:57287"/>
        <dbReference type="ChEBI" id="CHEBI:57288"/>
        <dbReference type="ChEBI" id="CHEBI:58342"/>
        <dbReference type="ChEBI" id="CHEBI:90726"/>
        <dbReference type="EC" id="2.3.1.16"/>
    </reaction>
</comment>
<comment type="pathway">
    <text evidence="1">Lipid metabolism; fatty acid beta-oxidation.</text>
</comment>
<comment type="subunit">
    <text evidence="1">Heterotetramer of two alpha chains (FadJ) and two beta chains (FadI).</text>
</comment>
<comment type="subcellular location">
    <subcellularLocation>
        <location evidence="1">Cytoplasm</location>
    </subcellularLocation>
</comment>
<comment type="similarity">
    <text evidence="1">Belongs to the thiolase-like superfamily. Thiolase family.</text>
</comment>
<sequence>MSNSVNSSKYQPLTTRQGDRIAVVSGIRTPFAKQSTAFSTTPAVDLGKLAVKALMDKTDIDPKLIDQVVFGQVVQMPEAPNIAREIVLGTGMNIGTDAYSVTRACATSFQTTANVVESIMAGTIDIGIAGGADSSSVLPIGVSKKLASTLLALSKTKTVYQKLSLLRTLSLKDIAPVPPAVAEYSTGISMGQTAEQMAKSHGITREEQDALAHRSHTLAAKAWKDGLIQDEVMTAFPEPYTAWLDHDNNIRHDSDLASYAKLRPAFDHKYGSVTAANSTPLTDGGAALLLMSEKRAKELGYEPLGYIRSFAFSAIDVHHDMLMGPSYATPMALDKAGISLSDLTLIDMHEAFAAQTLSNVKMFASNKFAKEYLGRDKAIGEIDMEKFNVLGGSIAYGHPFAATGARMIIQTLRELKRRGGGLGLNTACAAGGLGAAMVLEVE</sequence>
<dbReference type="EC" id="2.3.1.16" evidence="1"/>
<dbReference type="EMBL" id="CP000020">
    <property type="protein sequence ID" value="AAW86306.1"/>
    <property type="molecule type" value="Genomic_DNA"/>
</dbReference>
<dbReference type="RefSeq" id="WP_011262340.1">
    <property type="nucleotide sequence ID" value="NC_006840.2"/>
</dbReference>
<dbReference type="RefSeq" id="YP_205194.1">
    <property type="nucleotide sequence ID" value="NC_006840.2"/>
</dbReference>
<dbReference type="SMR" id="Q5E3U0"/>
<dbReference type="STRING" id="312309.VF_1811"/>
<dbReference type="EnsemblBacteria" id="AAW86306">
    <property type="protein sequence ID" value="AAW86306"/>
    <property type="gene ID" value="VF_1811"/>
</dbReference>
<dbReference type="GeneID" id="54164512"/>
<dbReference type="KEGG" id="vfi:VF_1811"/>
<dbReference type="PATRIC" id="fig|312309.11.peg.1839"/>
<dbReference type="eggNOG" id="COG0183">
    <property type="taxonomic scope" value="Bacteria"/>
</dbReference>
<dbReference type="HOGENOM" id="CLU_031026_2_0_6"/>
<dbReference type="OrthoDB" id="8951704at2"/>
<dbReference type="UniPathway" id="UPA00659"/>
<dbReference type="Proteomes" id="UP000000537">
    <property type="component" value="Chromosome I"/>
</dbReference>
<dbReference type="GO" id="GO:0005829">
    <property type="term" value="C:cytosol"/>
    <property type="evidence" value="ECO:0007669"/>
    <property type="project" value="TreeGrafter"/>
</dbReference>
<dbReference type="GO" id="GO:0003988">
    <property type="term" value="F:acetyl-CoA C-acyltransferase activity"/>
    <property type="evidence" value="ECO:0007669"/>
    <property type="project" value="UniProtKB-UniRule"/>
</dbReference>
<dbReference type="GO" id="GO:0006635">
    <property type="term" value="P:fatty acid beta-oxidation"/>
    <property type="evidence" value="ECO:0007669"/>
    <property type="project" value="UniProtKB-UniRule"/>
</dbReference>
<dbReference type="CDD" id="cd00751">
    <property type="entry name" value="thiolase"/>
    <property type="match status" value="1"/>
</dbReference>
<dbReference type="FunFam" id="3.40.47.10:FF:000011">
    <property type="entry name" value="3-ketoacyl-CoA thiolase"/>
    <property type="match status" value="1"/>
</dbReference>
<dbReference type="Gene3D" id="3.40.47.10">
    <property type="match status" value="1"/>
</dbReference>
<dbReference type="HAMAP" id="MF_01618">
    <property type="entry name" value="FadI"/>
    <property type="match status" value="1"/>
</dbReference>
<dbReference type="InterPro" id="IPR012806">
    <property type="entry name" value="Ac-CoA_C-AcTrfase_FadI"/>
</dbReference>
<dbReference type="InterPro" id="IPR002155">
    <property type="entry name" value="Thiolase"/>
</dbReference>
<dbReference type="InterPro" id="IPR016039">
    <property type="entry name" value="Thiolase-like"/>
</dbReference>
<dbReference type="InterPro" id="IPR020617">
    <property type="entry name" value="Thiolase_C"/>
</dbReference>
<dbReference type="InterPro" id="IPR020613">
    <property type="entry name" value="Thiolase_CS"/>
</dbReference>
<dbReference type="InterPro" id="IPR020616">
    <property type="entry name" value="Thiolase_N"/>
</dbReference>
<dbReference type="NCBIfam" id="TIGR01930">
    <property type="entry name" value="AcCoA-C-Actrans"/>
    <property type="match status" value="1"/>
</dbReference>
<dbReference type="NCBIfam" id="TIGR02446">
    <property type="entry name" value="FadI"/>
    <property type="match status" value="1"/>
</dbReference>
<dbReference type="NCBIfam" id="NF006516">
    <property type="entry name" value="PRK08963.1"/>
    <property type="match status" value="1"/>
</dbReference>
<dbReference type="PANTHER" id="PTHR18919:SF107">
    <property type="entry name" value="ACETYL-COA ACETYLTRANSFERASE, CYTOSOLIC"/>
    <property type="match status" value="1"/>
</dbReference>
<dbReference type="PANTHER" id="PTHR18919">
    <property type="entry name" value="ACETYL-COA C-ACYLTRANSFERASE"/>
    <property type="match status" value="1"/>
</dbReference>
<dbReference type="Pfam" id="PF02803">
    <property type="entry name" value="Thiolase_C"/>
    <property type="match status" value="1"/>
</dbReference>
<dbReference type="Pfam" id="PF00108">
    <property type="entry name" value="Thiolase_N"/>
    <property type="match status" value="1"/>
</dbReference>
<dbReference type="PIRSF" id="PIRSF000429">
    <property type="entry name" value="Ac-CoA_Ac_transf"/>
    <property type="match status" value="1"/>
</dbReference>
<dbReference type="SUPFAM" id="SSF53901">
    <property type="entry name" value="Thiolase-like"/>
    <property type="match status" value="2"/>
</dbReference>
<dbReference type="PROSITE" id="PS00737">
    <property type="entry name" value="THIOLASE_2"/>
    <property type="match status" value="1"/>
</dbReference>
<feature type="chain" id="PRO_0000206450" description="3-ketoacyl-CoA thiolase">
    <location>
        <begin position="1"/>
        <end position="442"/>
    </location>
</feature>
<feature type="active site" description="Acyl-thioester intermediate" evidence="1">
    <location>
        <position position="105"/>
    </location>
</feature>
<feature type="active site" description="Proton acceptor" evidence="1">
    <location>
        <position position="398"/>
    </location>
</feature>
<feature type="active site" description="Proton acceptor" evidence="1">
    <location>
        <position position="428"/>
    </location>
</feature>
<protein>
    <recommendedName>
        <fullName evidence="1">3-ketoacyl-CoA thiolase</fullName>
        <ecNumber evidence="1">2.3.1.16</ecNumber>
    </recommendedName>
    <alternativeName>
        <fullName evidence="1">ACSs</fullName>
    </alternativeName>
    <alternativeName>
        <fullName evidence="1">Acetyl-CoA acyltransferase</fullName>
    </alternativeName>
    <alternativeName>
        <fullName evidence="1">Acyl-CoA ligase</fullName>
    </alternativeName>
    <alternativeName>
        <fullName evidence="1">Beta-ketothiolase</fullName>
    </alternativeName>
    <alternativeName>
        <fullName evidence="1">Fatty acid oxidation complex subunit beta</fullName>
    </alternativeName>
</protein>
<proteinExistence type="inferred from homology"/>
<accession>Q5E3U0</accession>
<evidence type="ECO:0000255" key="1">
    <source>
        <dbReference type="HAMAP-Rule" id="MF_01618"/>
    </source>
</evidence>
<keyword id="KW-0012">Acyltransferase</keyword>
<keyword id="KW-0963">Cytoplasm</keyword>
<keyword id="KW-0276">Fatty acid metabolism</keyword>
<keyword id="KW-0442">Lipid degradation</keyword>
<keyword id="KW-0443">Lipid metabolism</keyword>
<keyword id="KW-1185">Reference proteome</keyword>
<keyword id="KW-0808">Transferase</keyword>
<reference key="1">
    <citation type="journal article" date="2005" name="Proc. Natl. Acad. Sci. U.S.A.">
        <title>Complete genome sequence of Vibrio fischeri: a symbiotic bacterium with pathogenic congeners.</title>
        <authorList>
            <person name="Ruby E.G."/>
            <person name="Urbanowski M."/>
            <person name="Campbell J."/>
            <person name="Dunn A."/>
            <person name="Faini M."/>
            <person name="Gunsalus R."/>
            <person name="Lostroh P."/>
            <person name="Lupp C."/>
            <person name="McCann J."/>
            <person name="Millikan D."/>
            <person name="Schaefer A."/>
            <person name="Stabb E."/>
            <person name="Stevens A."/>
            <person name="Visick K."/>
            <person name="Whistler C."/>
            <person name="Greenberg E.P."/>
        </authorList>
    </citation>
    <scope>NUCLEOTIDE SEQUENCE [LARGE SCALE GENOMIC DNA]</scope>
    <source>
        <strain>ATCC 700601 / ES114</strain>
    </source>
</reference>
<gene>
    <name evidence="1" type="primary">fadI</name>
    <name type="ordered locus">VF_1811</name>
</gene>
<organism>
    <name type="scientific">Aliivibrio fischeri (strain ATCC 700601 / ES114)</name>
    <name type="common">Vibrio fischeri</name>
    <dbReference type="NCBI Taxonomy" id="312309"/>
    <lineage>
        <taxon>Bacteria</taxon>
        <taxon>Pseudomonadati</taxon>
        <taxon>Pseudomonadota</taxon>
        <taxon>Gammaproteobacteria</taxon>
        <taxon>Vibrionales</taxon>
        <taxon>Vibrionaceae</taxon>
        <taxon>Aliivibrio</taxon>
    </lineage>
</organism>